<accession>P0A594</accession>
<accession>Q10784</accession>
<evidence type="ECO:0000250" key="1"/>
<evidence type="ECO:0000255" key="2"/>
<evidence type="ECO:0000305" key="3"/>
<sequence>MGLLSRLRKREPISIYDKIGGHEAIEVVVEDFYVRVLADDQLSAFFSGTNMSRLKGKQVEFFAAALGGPEPYTGAPMKQVHQGRGITMHHFSLVAGHLADALTAAGVPSETITEILGVIAPLAVDVTSGESTTAPV</sequence>
<keyword id="KW-0349">Heme</keyword>
<keyword id="KW-0408">Iron</keyword>
<keyword id="KW-0479">Metal-binding</keyword>
<keyword id="KW-0561">Oxygen transport</keyword>
<keyword id="KW-0813">Transport</keyword>
<feature type="chain" id="PRO_0000162639" description="Group 1 truncated hemoglobin GlbN">
    <location>
        <begin position="1"/>
        <end position="136"/>
    </location>
</feature>
<feature type="binding site" description="proximal binding residue" evidence="2">
    <location>
        <position position="81"/>
    </location>
    <ligand>
        <name>heme</name>
        <dbReference type="ChEBI" id="CHEBI:30413"/>
    </ligand>
    <ligandPart>
        <name>Fe</name>
        <dbReference type="ChEBI" id="CHEBI:18248"/>
    </ligandPart>
</feature>
<organism>
    <name type="scientific">Mycolicibacterium smegmatis</name>
    <name type="common">Mycobacterium smegmatis</name>
    <dbReference type="NCBI Taxonomy" id="1772"/>
    <lineage>
        <taxon>Bacteria</taxon>
        <taxon>Bacillati</taxon>
        <taxon>Actinomycetota</taxon>
        <taxon>Actinomycetes</taxon>
        <taxon>Mycobacteriales</taxon>
        <taxon>Mycobacteriaceae</taxon>
        <taxon>Mycolicibacterium</taxon>
    </lineage>
</organism>
<protein>
    <recommendedName>
        <fullName>Group 1 truncated hemoglobin GlbN</fullName>
    </recommendedName>
    <alternativeName>
        <fullName>Hemoglobin-like protein HbN</fullName>
    </alternativeName>
    <alternativeName>
        <fullName>Truncated hemoglobin</fullName>
        <shortName>trHbN</shortName>
    </alternativeName>
</protein>
<name>TRHBN_MYCSM</name>
<comment type="function">
    <text evidence="1">Binds oxygen cooperatively with very high affinity because of a fast combination and a slow dissociation rate.</text>
</comment>
<comment type="cofactor">
    <cofactor evidence="1">
        <name>heme</name>
        <dbReference type="ChEBI" id="CHEBI:30413"/>
    </cofactor>
    <text evidence="1">Binds 1 heme group per subunit.</text>
</comment>
<comment type="subunit">
    <text evidence="1">Homodimer.</text>
</comment>
<comment type="similarity">
    <text evidence="3">Belongs to the truncated hemoglobin family. Group I subfamily.</text>
</comment>
<reference key="1">
    <citation type="submission" date="1999-09" db="EMBL/GenBank/DDBJ databases">
        <title>Cloning, expression and characterization of globin like genes of Mycobacterium in insect cells(sf9).</title>
        <authorList>
            <person name="Kumar A."/>
            <person name="Rawat V.P.S."/>
            <person name="Das R.H."/>
        </authorList>
    </citation>
    <scope>NUCLEOTIDE SEQUENCE [GENOMIC DNA]</scope>
    <source>
        <strain>LR222</strain>
    </source>
</reference>
<gene>
    <name type="primary">glbN</name>
</gene>
<proteinExistence type="inferred from homology"/>
<dbReference type="EMBL" id="AJ249386">
    <property type="protein sequence ID" value="CAB56291.1"/>
    <property type="molecule type" value="Genomic_DNA"/>
</dbReference>
<dbReference type="BMRB" id="P0A594"/>
<dbReference type="SMR" id="P0A594"/>
<dbReference type="GO" id="GO:0020037">
    <property type="term" value="F:heme binding"/>
    <property type="evidence" value="ECO:0007669"/>
    <property type="project" value="InterPro"/>
</dbReference>
<dbReference type="GO" id="GO:0046872">
    <property type="term" value="F:metal ion binding"/>
    <property type="evidence" value="ECO:0007669"/>
    <property type="project" value="UniProtKB-KW"/>
</dbReference>
<dbReference type="GO" id="GO:0019825">
    <property type="term" value="F:oxygen binding"/>
    <property type="evidence" value="ECO:0007669"/>
    <property type="project" value="InterPro"/>
</dbReference>
<dbReference type="GO" id="GO:0005344">
    <property type="term" value="F:oxygen carrier activity"/>
    <property type="evidence" value="ECO:0007669"/>
    <property type="project" value="UniProtKB-KW"/>
</dbReference>
<dbReference type="CDD" id="cd14756">
    <property type="entry name" value="TrHb"/>
    <property type="match status" value="1"/>
</dbReference>
<dbReference type="FunFam" id="1.10.490.10:FF:000010">
    <property type="entry name" value="Group 1 truncated hemoglobin"/>
    <property type="match status" value="1"/>
</dbReference>
<dbReference type="Gene3D" id="1.10.490.10">
    <property type="entry name" value="Globins"/>
    <property type="match status" value="1"/>
</dbReference>
<dbReference type="InterPro" id="IPR009050">
    <property type="entry name" value="Globin-like_sf"/>
</dbReference>
<dbReference type="InterPro" id="IPR012292">
    <property type="entry name" value="Globin/Proto"/>
</dbReference>
<dbReference type="InterPro" id="IPR019795">
    <property type="entry name" value="Globin_bac-like_CS"/>
</dbReference>
<dbReference type="InterPro" id="IPR001486">
    <property type="entry name" value="Hemoglobin_trunc"/>
</dbReference>
<dbReference type="InterPro" id="IPR016339">
    <property type="entry name" value="Hemoglobin_trunc_I"/>
</dbReference>
<dbReference type="Pfam" id="PF01152">
    <property type="entry name" value="Bac_globin"/>
    <property type="match status" value="1"/>
</dbReference>
<dbReference type="PIRSF" id="PIRSF002030">
    <property type="entry name" value="Globin_Protozoa/Cyanobacteria"/>
    <property type="match status" value="1"/>
</dbReference>
<dbReference type="SUPFAM" id="SSF46458">
    <property type="entry name" value="Globin-like"/>
    <property type="match status" value="1"/>
</dbReference>
<dbReference type="PROSITE" id="PS01213">
    <property type="entry name" value="GLOBIN_FAM_2"/>
    <property type="match status" value="1"/>
</dbReference>